<sequence length="396" mass="42378">MPVDFHYGVRVDVTLLSKIRRVNEHIKSATKTGVVQVHGSACTPTLSVLSSVGTAGVLGLRIKNALTPLVGHTEGSGDVSFSFRNTSVGSGFTHTRELFGANVLDAGIAFYRKGEACDTGAQPQFVRTTISYGDNLTSTVHKSVVDQKGILPFHDRMEAGGRTTRLLLCGKTGAFLLKWLRQQKTKEDQTVTVSVSETLSIVTFSLGGVSKIIDFKPETKPVSGWDGLKGKKSVDVGVVHTDALSRVSLESLIAALRLCKVPGWFTPGLIWHSNEILEVEGVPTGCQSGDVKLSVLLLEVNRSVSAEGGESSQKVPDSIPDSRRQPELESPDSPPLTPVGPFGPLEDASEDAASVTSCPPAAPTKDSTKRPHKRRSDSSQSRDRGKVPKTTFNPLI</sequence>
<feature type="chain" id="PRO_0000423804" description="DNA polymerase processivity factor">
    <location>
        <begin position="1"/>
        <end position="396"/>
    </location>
</feature>
<feature type="region of interest" description="Disordered" evidence="2">
    <location>
        <begin position="306"/>
        <end position="396"/>
    </location>
</feature>
<feature type="compositionally biased region" description="Basic and acidic residues" evidence="2">
    <location>
        <begin position="376"/>
        <end position="386"/>
    </location>
</feature>
<evidence type="ECO:0000250" key="1"/>
<evidence type="ECO:0000256" key="2">
    <source>
        <dbReference type="SAM" id="MobiDB-lite"/>
    </source>
</evidence>
<evidence type="ECO:0000305" key="3"/>
<gene>
    <name type="primary">ORF59</name>
</gene>
<organismHost>
    <name type="scientific">Homo sapiens</name>
    <name type="common">Human</name>
    <dbReference type="NCBI Taxonomy" id="9606"/>
</organismHost>
<proteinExistence type="inferred from homology"/>
<comment type="function">
    <text evidence="1">Plays an essential role in the viral lytic DNA replication by acting as the polymerase accessory subunit. Stimulates the viral DNA polymerase activity and appears to function with it as a holoenzyme. Increases the processivity of the viral polymerase, probably by acting as a sliding clamp that prevents dissociation of the polymerase from the active template (By similarity).</text>
</comment>
<comment type="subunit">
    <text evidence="1">Homooligomerizes and adopts an oligomeric ring-shaped structure composed of 6 subunits. Forms a complex with the DNA-binding protein, the DNA polymerase subunit, and the alkaline exonuclease (By similarity).</text>
</comment>
<comment type="subcellular location">
    <subcellularLocation>
        <location evidence="1">Virion tegument</location>
    </subcellularLocation>
    <subcellularLocation>
        <location evidence="1">Host nucleus</location>
    </subcellularLocation>
</comment>
<comment type="similarity">
    <text evidence="3">Belongs to the herpesviridae DNA polymerase accessory subunit family.</text>
</comment>
<reference key="1">
    <citation type="journal article" date="1999" name="J. Virol.">
        <title>Identification of a spliced gene from Kaposi's sarcoma-associated herpesvirus encoding a protein with similarities to latent membrane proteins 1 and 2A of Epstein-Barr virus.</title>
        <authorList>
            <person name="Glenn M."/>
            <person name="Rainbow L."/>
            <person name="Aurade F."/>
            <person name="Davison A."/>
            <person name="Schulz T.F."/>
        </authorList>
    </citation>
    <scope>NUCLEOTIDE SEQUENCE [LARGE SCALE GENOMIC DNA]</scope>
</reference>
<reference key="2">
    <citation type="journal article" date="2006" name="J. Gen. Virol.">
        <title>Kaposi's sarcoma-associated herpesvirus immune modulation: an overview.</title>
        <authorList>
            <person name="Rezaee S.A.R."/>
            <person name="Cunningham C."/>
            <person name="Davison A.J."/>
            <person name="Blackbourn D.J."/>
        </authorList>
    </citation>
    <scope>NUCLEOTIDE SEQUENCE [LARGE SCALE GENOMIC DNA]</scope>
</reference>
<protein>
    <recommendedName>
        <fullName>DNA polymerase processivity factor</fullName>
    </recommendedName>
</protein>
<keyword id="KW-0010">Activator</keyword>
<keyword id="KW-0238">DNA-binding</keyword>
<keyword id="KW-0244">Early protein</keyword>
<keyword id="KW-1048">Host nucleus</keyword>
<keyword id="KW-1185">Reference proteome</keyword>
<keyword id="KW-0804">Transcription</keyword>
<keyword id="KW-0805">Transcription regulation</keyword>
<keyword id="KW-0946">Virion</keyword>
<keyword id="KW-0920">Virion tegument</keyword>
<organism>
    <name type="scientific">Human herpesvirus 8 type P (isolate GK18)</name>
    <name type="common">HHV-8</name>
    <name type="synonym">Kaposi's sarcoma-associated herpesvirus</name>
    <dbReference type="NCBI Taxonomy" id="868565"/>
    <lineage>
        <taxon>Viruses</taxon>
        <taxon>Duplodnaviria</taxon>
        <taxon>Heunggongvirae</taxon>
        <taxon>Peploviricota</taxon>
        <taxon>Herviviricetes</taxon>
        <taxon>Herpesvirales</taxon>
        <taxon>Orthoherpesviridae</taxon>
        <taxon>Gammaherpesvirinae</taxon>
        <taxon>Rhadinovirus</taxon>
        <taxon>Rhadinovirus humangamma8</taxon>
        <taxon>Human herpesvirus 8</taxon>
    </lineage>
</organism>
<name>PAP_HHV8P</name>
<accession>F5HID2</accession>
<dbReference type="EMBL" id="AF148805">
    <property type="protein sequence ID" value="ABD28914.1"/>
    <property type="molecule type" value="Genomic_DNA"/>
</dbReference>
<dbReference type="RefSeq" id="YP_001129416.1">
    <property type="nucleotide sequence ID" value="NC_009333.1"/>
</dbReference>
<dbReference type="SMR" id="F5HID2"/>
<dbReference type="BioGRID" id="1776995">
    <property type="interactions" value="5"/>
</dbReference>
<dbReference type="iPTMnet" id="F5HID2"/>
<dbReference type="DNASU" id="4961492"/>
<dbReference type="GeneID" id="4961492"/>
<dbReference type="KEGG" id="vg:4961492"/>
<dbReference type="Proteomes" id="UP000000942">
    <property type="component" value="Segment"/>
</dbReference>
<dbReference type="GO" id="GO:0042025">
    <property type="term" value="C:host cell nucleus"/>
    <property type="evidence" value="ECO:0007669"/>
    <property type="project" value="UniProtKB-SubCell"/>
</dbReference>
<dbReference type="GO" id="GO:0019033">
    <property type="term" value="C:viral tegument"/>
    <property type="evidence" value="ECO:0007669"/>
    <property type="project" value="UniProtKB-SubCell"/>
</dbReference>
<dbReference type="GO" id="GO:0003677">
    <property type="term" value="F:DNA binding"/>
    <property type="evidence" value="ECO:0007669"/>
    <property type="project" value="UniProtKB-KW"/>
</dbReference>
<dbReference type="GO" id="GO:0039686">
    <property type="term" value="P:bidirectional double-stranded viral DNA replication"/>
    <property type="evidence" value="ECO:0000314"/>
    <property type="project" value="UniProtKB"/>
</dbReference>
<dbReference type="Gene3D" id="3.70.10.10">
    <property type="match status" value="1"/>
</dbReference>
<dbReference type="InterPro" id="IPR007013">
    <property type="entry name" value="DNA_pol_proc_fac_herpes"/>
</dbReference>
<dbReference type="Pfam" id="PF04929">
    <property type="entry name" value="Herpes_DNAp_acc"/>
    <property type="match status" value="1"/>
</dbReference>